<evidence type="ECO:0000250" key="1"/>
<evidence type="ECO:0000255" key="2"/>
<evidence type="ECO:0000269" key="3">
    <source>
    </source>
</evidence>
<evidence type="ECO:0000303" key="4">
    <source ref="1"/>
</evidence>
<evidence type="ECO:0000305" key="5"/>
<organism>
    <name type="scientific">Homo sapiens</name>
    <name type="common">Human</name>
    <dbReference type="NCBI Taxonomy" id="9606"/>
    <lineage>
        <taxon>Eukaryota</taxon>
        <taxon>Metazoa</taxon>
        <taxon>Chordata</taxon>
        <taxon>Craniata</taxon>
        <taxon>Vertebrata</taxon>
        <taxon>Euteleostomi</taxon>
        <taxon>Mammalia</taxon>
        <taxon>Eutheria</taxon>
        <taxon>Euarchontoglires</taxon>
        <taxon>Primates</taxon>
        <taxon>Haplorrhini</taxon>
        <taxon>Catarrhini</taxon>
        <taxon>Hominidae</taxon>
        <taxon>Homo</taxon>
    </lineage>
</organism>
<dbReference type="EMBL" id="AY324188">
    <property type="protein sequence ID" value="AAQ94112.1"/>
    <property type="molecule type" value="mRNA"/>
</dbReference>
<dbReference type="EMBL" id="AY324189">
    <property type="protein sequence ID" value="AAQ94113.1"/>
    <property type="molecule type" value="mRNA"/>
</dbReference>
<dbReference type="EMBL" id="AY324190">
    <property type="protein sequence ID" value="AAQ94114.1"/>
    <property type="molecule type" value="mRNA"/>
</dbReference>
<dbReference type="EMBL" id="AP001034">
    <property type="status" value="NOT_ANNOTATED_CDS"/>
    <property type="molecule type" value="Genomic_DNA"/>
</dbReference>
<dbReference type="EMBL" id="BC140799">
    <property type="protein sequence ID" value="AAI40800.1"/>
    <property type="molecule type" value="mRNA"/>
</dbReference>
<dbReference type="CCDS" id="CCDS31571.1">
    <molecule id="Q5J8X5-1"/>
</dbReference>
<dbReference type="CCDS" id="CCDS41653.1">
    <molecule id="Q5J8X5-2"/>
</dbReference>
<dbReference type="CCDS" id="CCDS60801.1">
    <molecule id="Q5J8X5-3"/>
</dbReference>
<dbReference type="RefSeq" id="NP_001012417.2">
    <molecule id="Q5J8X5-1"/>
    <property type="nucleotide sequence ID" value="NM_001012417.3"/>
</dbReference>
<dbReference type="RefSeq" id="NP_001094379.1">
    <molecule id="Q5J8X5-2"/>
    <property type="nucleotide sequence ID" value="NM_001100909.2"/>
</dbReference>
<dbReference type="RefSeq" id="NP_001265249.1">
    <molecule id="Q5J8X5-3"/>
    <property type="nucleotide sequence ID" value="NM_001278320.2"/>
</dbReference>
<dbReference type="RefSeq" id="XP_047282996.1">
    <molecule id="Q5J8X5-1"/>
    <property type="nucleotide sequence ID" value="XM_047427040.1"/>
</dbReference>
<dbReference type="RefSeq" id="XP_047282997.1">
    <molecule id="Q5J8X5-3"/>
    <property type="nucleotide sequence ID" value="XM_047427041.1"/>
</dbReference>
<dbReference type="SMR" id="Q5J8X5"/>
<dbReference type="BioGRID" id="139008">
    <property type="interactions" value="69"/>
</dbReference>
<dbReference type="FunCoup" id="Q5J8X5">
    <property type="interactions" value="234"/>
</dbReference>
<dbReference type="IntAct" id="Q5J8X5">
    <property type="interactions" value="60"/>
</dbReference>
<dbReference type="BioMuta" id="MS4A13"/>
<dbReference type="DMDM" id="334302831"/>
<dbReference type="PaxDb" id="9606-ENSP00000367428"/>
<dbReference type="Antibodypedia" id="50523">
    <property type="antibodies" value="57 antibodies from 12 providers"/>
</dbReference>
<dbReference type="DNASU" id="503497"/>
<dbReference type="Ensembl" id="ENST00000378185.6">
    <molecule id="Q5J8X5-2"/>
    <property type="protein sequence ID" value="ENSP00000367427.2"/>
    <property type="gene ID" value="ENSG00000204979.8"/>
</dbReference>
<dbReference type="Ensembl" id="ENST00000378186.7">
    <molecule id="Q5J8X5-1"/>
    <property type="protein sequence ID" value="ENSP00000367428.2"/>
    <property type="gene ID" value="ENSG00000204979.8"/>
</dbReference>
<dbReference type="Ensembl" id="ENST00000437058.6">
    <molecule id="Q5J8X5-3"/>
    <property type="protein sequence ID" value="ENSP00000415535.2"/>
    <property type="gene ID" value="ENSG00000204979.8"/>
</dbReference>
<dbReference type="GeneID" id="503497"/>
<dbReference type="KEGG" id="hsa:503497"/>
<dbReference type="MANE-Select" id="ENST00000378186.7">
    <property type="protein sequence ID" value="ENSP00000367428.2"/>
    <property type="RefSeq nucleotide sequence ID" value="NM_001012417.3"/>
    <property type="RefSeq protein sequence ID" value="NP_001012417.2"/>
</dbReference>
<dbReference type="UCSC" id="uc001nps.4">
    <molecule id="Q5J8X5-1"/>
    <property type="organism name" value="human"/>
</dbReference>
<dbReference type="AGR" id="HGNC:16674"/>
<dbReference type="CTD" id="503497"/>
<dbReference type="GeneCards" id="MS4A13"/>
<dbReference type="HGNC" id="HGNC:16674">
    <property type="gene designation" value="MS4A13"/>
</dbReference>
<dbReference type="HPA" id="ENSG00000204979">
    <property type="expression patterns" value="Tissue enriched (testis)"/>
</dbReference>
<dbReference type="neXtProt" id="NX_Q5J8X5"/>
<dbReference type="OpenTargets" id="ENSG00000204979"/>
<dbReference type="PharmGKB" id="PA142671314"/>
<dbReference type="VEuPathDB" id="HostDB:ENSG00000204979"/>
<dbReference type="eggNOG" id="ENOG502RTZG">
    <property type="taxonomic scope" value="Eukaryota"/>
</dbReference>
<dbReference type="GeneTree" id="ENSGT00390000015662"/>
<dbReference type="HOGENOM" id="CLU_144238_0_0_1"/>
<dbReference type="InParanoid" id="Q5J8X5"/>
<dbReference type="OMA" id="FNVLMWY"/>
<dbReference type="OrthoDB" id="9451513at2759"/>
<dbReference type="PAN-GO" id="Q5J8X5">
    <property type="GO annotations" value="2 GO annotations based on evolutionary models"/>
</dbReference>
<dbReference type="PhylomeDB" id="Q5J8X5"/>
<dbReference type="TreeFam" id="TF353242"/>
<dbReference type="PathwayCommons" id="Q5J8X5"/>
<dbReference type="SignaLink" id="Q5J8X5"/>
<dbReference type="BioGRID-ORCS" id="503497">
    <property type="hits" value="6 hits in 1063 CRISPR screens"/>
</dbReference>
<dbReference type="ChiTaRS" id="MS4A13">
    <property type="organism name" value="human"/>
</dbReference>
<dbReference type="GenomeRNAi" id="503497"/>
<dbReference type="Pharos" id="Q5J8X5">
    <property type="development level" value="Tdark"/>
</dbReference>
<dbReference type="PRO" id="PR:Q5J8X5"/>
<dbReference type="Proteomes" id="UP000005640">
    <property type="component" value="Chromosome 11"/>
</dbReference>
<dbReference type="RNAct" id="Q5J8X5">
    <property type="molecule type" value="protein"/>
</dbReference>
<dbReference type="Bgee" id="ENSG00000204979">
    <property type="expression patterns" value="Expressed in male germ line stem cell (sensu Vertebrata) in testis and 5 other cell types or tissues"/>
</dbReference>
<dbReference type="ExpressionAtlas" id="Q5J8X5">
    <property type="expression patterns" value="baseline and differential"/>
</dbReference>
<dbReference type="GO" id="GO:0005886">
    <property type="term" value="C:plasma membrane"/>
    <property type="evidence" value="ECO:0000318"/>
    <property type="project" value="GO_Central"/>
</dbReference>
<dbReference type="GO" id="GO:0007166">
    <property type="term" value="P:cell surface receptor signaling pathway"/>
    <property type="evidence" value="ECO:0000318"/>
    <property type="project" value="GO_Central"/>
</dbReference>
<dbReference type="InterPro" id="IPR007237">
    <property type="entry name" value="CD20-like"/>
</dbReference>
<dbReference type="InterPro" id="IPR030417">
    <property type="entry name" value="MS4A"/>
</dbReference>
<dbReference type="PANTHER" id="PTHR23320:SF42">
    <property type="entry name" value="MEMBRANE-SPANNING 4-DOMAINS SUBFAMILY A MEMBER 13"/>
    <property type="match status" value="1"/>
</dbReference>
<dbReference type="PANTHER" id="PTHR23320">
    <property type="entry name" value="MEMBRANE-SPANNING 4-DOMAINS SUBFAMILY A MS4A -RELATED"/>
    <property type="match status" value="1"/>
</dbReference>
<dbReference type="Pfam" id="PF04103">
    <property type="entry name" value="CD20"/>
    <property type="match status" value="1"/>
</dbReference>
<gene>
    <name type="primary">MS4A13</name>
</gene>
<keyword id="KW-0025">Alternative splicing</keyword>
<keyword id="KW-0472">Membrane</keyword>
<keyword id="KW-1185">Reference proteome</keyword>
<keyword id="KW-0812">Transmembrane</keyword>
<keyword id="KW-1133">Transmembrane helix</keyword>
<comment type="function">
    <text evidence="1">May be involved in signal transduction as a component of a multimeric receptor complex.</text>
</comment>
<comment type="interaction">
    <interactant intactId="EBI-12070086">
        <id>Q5J8X5</id>
    </interactant>
    <interactant intactId="EBI-12701138">
        <id>P41181</id>
        <label>AQP2</label>
    </interactant>
    <organismsDiffer>false</organismsDiffer>
    <experiments>3</experiments>
</comment>
<comment type="interaction">
    <interactant intactId="EBI-12070086">
        <id>Q5J8X5</id>
    </interactant>
    <interactant intactId="EBI-13059134">
        <id>Q13520</id>
        <label>AQP6</label>
    </interactant>
    <organismsDiffer>false</organismsDiffer>
    <experiments>3</experiments>
</comment>
<comment type="interaction">
    <interactant intactId="EBI-12070086">
        <id>Q5J8X5</id>
    </interactant>
    <interactant intactId="EBI-12808270">
        <id>P07307-3</id>
        <label>ASGR2</label>
    </interactant>
    <organismsDiffer>false</organismsDiffer>
    <experiments>3</experiments>
</comment>
<comment type="interaction">
    <interactant intactId="EBI-12070086">
        <id>Q5J8X5</id>
    </interactant>
    <interactant intactId="EBI-12935759">
        <id>O15342</id>
        <label>ATP6V0E1</label>
    </interactant>
    <organismsDiffer>false</organismsDiffer>
    <experiments>3</experiments>
</comment>
<comment type="interaction">
    <interactant intactId="EBI-12070086">
        <id>Q5J8X5</id>
    </interactant>
    <interactant intactId="EBI-18631885">
        <id>O76090-4</id>
        <label>BEST1</label>
    </interactant>
    <organismsDiffer>false</organismsDiffer>
    <experiments>3</experiments>
</comment>
<comment type="interaction">
    <interactant intactId="EBI-12070086">
        <id>Q5J8X5</id>
    </interactant>
    <interactant intactId="EBI-700794">
        <id>Q13323</id>
        <label>BIK</label>
    </interactant>
    <organismsDiffer>false</organismsDiffer>
    <experiments>3</experiments>
</comment>
<comment type="interaction">
    <interactant intactId="EBI-12070086">
        <id>Q5J8X5</id>
    </interactant>
    <interactant intactId="EBI-19051169">
        <id>Q8N350-4</id>
        <label>CBARP</label>
    </interactant>
    <organismsDiffer>false</organismsDiffer>
    <experiments>3</experiments>
</comment>
<comment type="interaction">
    <interactant intactId="EBI-12070086">
        <id>Q5J8X5</id>
    </interactant>
    <interactant intactId="EBI-7797864">
        <id>P11912</id>
        <label>CD79A</label>
    </interactant>
    <organismsDiffer>false</organismsDiffer>
    <experiments>3</experiments>
</comment>
<comment type="interaction">
    <interactant intactId="EBI-12070086">
        <id>Q5J8X5</id>
    </interactant>
    <interactant intactId="EBI-740744">
        <id>O95471</id>
        <label>CLDN7</label>
    </interactant>
    <organismsDiffer>false</organismsDiffer>
    <experiments>3</experiments>
</comment>
<comment type="interaction">
    <interactant intactId="EBI-12070086">
        <id>Q5J8X5</id>
    </interactant>
    <interactant intactId="EBI-6942903">
        <id>Q96BA8</id>
        <label>CREB3L1</label>
    </interactant>
    <organismsDiffer>false</organismsDiffer>
    <experiments>3</experiments>
</comment>
<comment type="interaction">
    <interactant intactId="EBI-12070086">
        <id>Q5J8X5</id>
    </interactant>
    <interactant intactId="EBI-852194">
        <id>Q68CJ9</id>
        <label>CREB3L3</label>
    </interactant>
    <organismsDiffer>false</organismsDiffer>
    <experiments>3</experiments>
</comment>
<comment type="interaction">
    <interactant intactId="EBI-12070086">
        <id>Q5J8X5</id>
    </interactant>
    <interactant intactId="EBI-12808806">
        <id>Q9Y4D2</id>
        <label>DAGLA</label>
    </interactant>
    <organismsDiffer>false</organismsDiffer>
    <experiments>3</experiments>
</comment>
<comment type="interaction">
    <interactant intactId="EBI-12070086">
        <id>Q5J8X5</id>
    </interactant>
    <interactant intactId="EBI-3915253">
        <id>Q15125</id>
        <label>EBP</label>
    </interactant>
    <organismsDiffer>false</organismsDiffer>
    <experiments>3</experiments>
</comment>
<comment type="interaction">
    <interactant intactId="EBI-12070086">
        <id>Q5J8X5</id>
    </interactant>
    <interactant intactId="EBI-529425">
        <id>Q92838</id>
        <label>EDA</label>
    </interactant>
    <organismsDiffer>false</organismsDiffer>
    <experiments>3</experiments>
</comment>
<comment type="interaction">
    <interactant intactId="EBI-12070086">
        <id>Q5J8X5</id>
    </interactant>
    <interactant intactId="EBI-17272224">
        <id>O14944</id>
        <label>EREG</label>
    </interactant>
    <organismsDiffer>false</organismsDiffer>
    <experiments>3</experiments>
</comment>
<comment type="interaction">
    <interactant intactId="EBI-12070086">
        <id>Q5J8X5</id>
    </interactant>
    <interactant intactId="EBI-781551">
        <id>Q9Y282</id>
        <label>ERGIC3</label>
    </interactant>
    <organismsDiffer>false</organismsDiffer>
    <experiments>3</experiments>
</comment>
<comment type="interaction">
    <interactant intactId="EBI-12070086">
        <id>Q5J8X5</id>
    </interactant>
    <interactant intactId="EBI-715362">
        <id>Q9H8M9</id>
        <label>EVA1A</label>
    </interactant>
    <organismsDiffer>false</organismsDiffer>
    <experiments>3</experiments>
</comment>
<comment type="interaction">
    <interactant intactId="EBI-12070086">
        <id>Q5J8X5</id>
    </interactant>
    <interactant intactId="EBI-18304435">
        <id>Q5JX71</id>
        <label>FAM209A</label>
    </interactant>
    <organismsDiffer>false</organismsDiffer>
    <experiments>3</experiments>
</comment>
<comment type="interaction">
    <interactant intactId="EBI-12070086">
        <id>Q5J8X5</id>
    </interactant>
    <interactant intactId="EBI-18938272">
        <id>Q96KR6</id>
        <label>FAM210B</label>
    </interactant>
    <organismsDiffer>false</organismsDiffer>
    <experiments>3</experiments>
</comment>
<comment type="interaction">
    <interactant intactId="EBI-12070086">
        <id>Q5J8X5</id>
    </interactant>
    <interactant intactId="EBI-2833872">
        <id>O15552</id>
        <label>FFAR2</label>
    </interactant>
    <organismsDiffer>false</organismsDiffer>
    <experiments>3</experiments>
</comment>
<comment type="interaction">
    <interactant intactId="EBI-12070086">
        <id>Q5J8X5</id>
    </interactant>
    <interactant intactId="EBI-6918707">
        <id>P35212</id>
        <label>GJA4</label>
    </interactant>
    <organismsDiffer>false</organismsDiffer>
    <experiments>3</experiments>
</comment>
<comment type="interaction">
    <interactant intactId="EBI-12070086">
        <id>Q5J8X5</id>
    </interactant>
    <interactant intactId="EBI-750433">
        <id>P36382</id>
        <label>GJA5</label>
    </interactant>
    <organismsDiffer>false</organismsDiffer>
    <experiments>3</experiments>
</comment>
<comment type="interaction">
    <interactant intactId="EBI-12070086">
        <id>Q5J8X5</id>
    </interactant>
    <interactant intactId="EBI-17458373">
        <id>P48165</id>
        <label>GJA8</label>
    </interactant>
    <organismsDiffer>false</organismsDiffer>
    <experiments>3</experiments>
</comment>
<comment type="interaction">
    <interactant intactId="EBI-12070086">
        <id>Q5J8X5</id>
    </interactant>
    <interactant intactId="EBI-17565645">
        <id>P08034</id>
        <label>GJB1</label>
    </interactant>
    <organismsDiffer>false</organismsDiffer>
    <experiments>3</experiments>
</comment>
<comment type="interaction">
    <interactant intactId="EBI-12070086">
        <id>Q5J8X5</id>
    </interactant>
    <interactant intactId="EBI-3909454">
        <id>O95377</id>
        <label>GJB5</label>
    </interactant>
    <organismsDiffer>false</organismsDiffer>
    <experiments>3</experiments>
</comment>
<comment type="interaction">
    <interactant intactId="EBI-12070086">
        <id>Q5J8X5</id>
    </interactant>
    <interactant intactId="EBI-13345609">
        <id>O95452</id>
        <label>GJB6</label>
    </interactant>
    <organismsDiffer>false</organismsDiffer>
    <experiments>3</experiments>
</comment>
<comment type="interaction">
    <interactant intactId="EBI-12070086">
        <id>Q5J8X5</id>
    </interactant>
    <interactant intactId="EBI-20110678">
        <id>Q8NFK1</id>
        <label>GJC3</label>
    </interactant>
    <organismsDiffer>false</organismsDiffer>
    <experiments>3</experiments>
</comment>
<comment type="interaction">
    <interactant intactId="EBI-12070086">
        <id>Q5J8X5</id>
    </interactant>
    <interactant intactId="EBI-13345167">
        <id>Q8TDT2</id>
        <label>GPR152</label>
    </interactant>
    <organismsDiffer>false</organismsDiffer>
    <experiments>3</experiments>
</comment>
<comment type="interaction">
    <interactant intactId="EBI-12070086">
        <id>Q5J8X5</id>
    </interactant>
    <interactant intactId="EBI-2868124">
        <id>Q9BSE4</id>
        <label>HERPUD2</label>
    </interactant>
    <organismsDiffer>false</organismsDiffer>
    <experiments>3</experiments>
</comment>
<comment type="interaction">
    <interactant intactId="EBI-12070086">
        <id>Q5J8X5</id>
    </interactant>
    <interactant intactId="EBI-11305455">
        <id>Q96MG2</id>
        <label>JSRP1</label>
    </interactant>
    <organismsDiffer>false</organismsDiffer>
    <experiments>3</experiments>
</comment>
<comment type="interaction">
    <interactant intactId="EBI-12070086">
        <id>Q5J8X5</id>
    </interactant>
    <interactant intactId="EBI-19112227">
        <id>Q86W47</id>
        <label>KCNMB4</label>
    </interactant>
    <organismsDiffer>false</organismsDiffer>
    <experiments>3</experiments>
</comment>
<comment type="interaction">
    <interactant intactId="EBI-12070086">
        <id>Q5J8X5</id>
    </interactant>
    <interactant intactId="EBI-9018187">
        <id>P26715</id>
        <label>KLRC1</label>
    </interactant>
    <organismsDiffer>false</organismsDiffer>
    <experiments>3</experiments>
</comment>
<comment type="interaction">
    <interactant intactId="EBI-12070086">
        <id>Q5J8X5</id>
    </interactant>
    <interactant intactId="EBI-2820517">
        <id>Q8TAF8</id>
        <label>LHFPL5</label>
    </interactant>
    <organismsDiffer>false</organismsDiffer>
    <experiments>3</experiments>
</comment>
<comment type="interaction">
    <interactant intactId="EBI-12070086">
        <id>Q5J8X5</id>
    </interactant>
    <interactant intactId="EBI-17775622">
        <id>Q96PB8</id>
        <label>LRRC3B</label>
    </interactant>
    <organismsDiffer>false</organismsDiffer>
    <experiments>3</experiments>
</comment>
<comment type="interaction">
    <interactant intactId="EBI-12070086">
        <id>Q5J8X5</id>
    </interactant>
    <interactant intactId="EBI-6163737">
        <id>Q8N4V1</id>
        <label>MMGT1</label>
    </interactant>
    <organismsDiffer>false</organismsDiffer>
    <experiments>3</experiments>
</comment>
<comment type="interaction">
    <interactant intactId="EBI-12070086">
        <id>Q5J8X5</id>
    </interactant>
    <interactant intactId="EBI-12806656">
        <id>Q96HJ5</id>
        <label>MS4A3</label>
    </interactant>
    <organismsDiffer>false</organismsDiffer>
    <experiments>3</experiments>
</comment>
<comment type="interaction">
    <interactant intactId="EBI-12070086">
        <id>Q5J8X5</id>
    </interactant>
    <interactant intactId="EBI-748927">
        <id>Q9NQX5</id>
        <label>NPDC1</label>
    </interactant>
    <organismsDiffer>false</organismsDiffer>
    <experiments>3</experiments>
</comment>
<comment type="interaction">
    <interactant intactId="EBI-12070086">
        <id>Q5J8X5</id>
    </interactant>
    <interactant intactId="EBI-12382569">
        <id>Q2M2E3</id>
        <label>ODF4</label>
    </interactant>
    <organismsDiffer>false</organismsDiffer>
    <experiments>3</experiments>
</comment>
<comment type="interaction">
    <interactant intactId="EBI-12070086">
        <id>Q5J8X5</id>
    </interactant>
    <interactant intactId="EBI-11337900">
        <id>Q9H5K3</id>
        <label>POMK</label>
    </interactant>
    <organismsDiffer>false</organismsDiffer>
    <experiments>3</experiments>
</comment>
<comment type="interaction">
    <interactant intactId="EBI-12070086">
        <id>Q5J8X5</id>
    </interactant>
    <interactant intactId="EBI-962893">
        <id>O60894</id>
        <label>RAMP1</label>
    </interactant>
    <organismsDiffer>false</organismsDiffer>
    <experiments>3</experiments>
</comment>
<comment type="interaction">
    <interactant intactId="EBI-12070086">
        <id>Q5J8X5</id>
    </interactant>
    <interactant intactId="EBI-15853497">
        <id>Q9UBD6</id>
        <label>RHCG</label>
    </interactant>
    <organismsDiffer>false</organismsDiffer>
    <experiments>3</experiments>
</comment>
<comment type="interaction">
    <interactant intactId="EBI-12070086">
        <id>Q5J8X5</id>
    </interactant>
    <interactant intactId="EBI-2340249">
        <id>Q96GF1</id>
        <label>RNF185</label>
    </interactant>
    <organismsDiffer>false</organismsDiffer>
    <experiments>3</experiments>
</comment>
<comment type="interaction">
    <interactant intactId="EBI-12070086">
        <id>Q5J8X5</id>
    </interactant>
    <interactant intactId="EBI-17247926">
        <id>Q9NY72</id>
        <label>SCN3B</label>
    </interactant>
    <organismsDiffer>false</organismsDiffer>
    <experiments>3</experiments>
</comment>
<comment type="interaction">
    <interactant intactId="EBI-12070086">
        <id>Q5J8X5</id>
    </interactant>
    <interactant intactId="EBI-12854384">
        <id>Q9Y666-2</id>
        <label>SLC12A7</label>
    </interactant>
    <organismsDiffer>false</organismsDiffer>
    <experiments>3</experiments>
</comment>
<comment type="interaction">
    <interactant intactId="EBI-12070086">
        <id>Q5J8X5</id>
    </interactant>
    <interactant intactId="EBI-12808018">
        <id>Q9UKG4</id>
        <label>SLC13A4</label>
    </interactant>
    <organismsDiffer>false</organismsDiffer>
    <experiments>3</experiments>
</comment>
<comment type="interaction">
    <interactant intactId="EBI-12070086">
        <id>Q5J8X5</id>
    </interactant>
    <interactant intactId="EBI-17595455">
        <id>P54219-3</id>
        <label>SLC18A1</label>
    </interactant>
    <organismsDiffer>false</organismsDiffer>
    <experiments>3</experiments>
</comment>
<comment type="interaction">
    <interactant intactId="EBI-12070086">
        <id>Q5J8X5</id>
    </interactant>
    <interactant intactId="EBI-8644112">
        <id>Q9BRI3</id>
        <label>SLC30A2</label>
    </interactant>
    <organismsDiffer>false</organismsDiffer>
    <experiments>6</experiments>
</comment>
<comment type="interaction">
    <interactant intactId="EBI-12070086">
        <id>Q5J8X5</id>
    </interactant>
    <interactant intactId="EBI-12898013">
        <id>Q9NP94</id>
        <label>SLC39A2</label>
    </interactant>
    <organismsDiffer>false</organismsDiffer>
    <experiments>3</experiments>
</comment>
<comment type="interaction">
    <interactant intactId="EBI-12070086">
        <id>Q5J8X5</id>
    </interactant>
    <interactant intactId="EBI-4289564">
        <id>P30825</id>
        <label>SLC7A1</label>
    </interactant>
    <organismsDiffer>false</organismsDiffer>
    <experiments>3</experiments>
</comment>
<comment type="interaction">
    <interactant intactId="EBI-12070086">
        <id>Q5J8X5</id>
    </interactant>
    <interactant intactId="EBI-10819434">
        <id>Q9NPE6</id>
        <label>SPAG4</label>
    </interactant>
    <organismsDiffer>false</organismsDiffer>
    <experiments>3</experiments>
</comment>
<comment type="interaction">
    <interactant intactId="EBI-12070086">
        <id>Q5J8X5</id>
    </interactant>
    <interactant intactId="EBI-17280858">
        <id>Q8WWF3</id>
        <label>SSMEM1</label>
    </interactant>
    <organismsDiffer>false</organismsDiffer>
    <experiments>3</experiments>
</comment>
<comment type="interaction">
    <interactant intactId="EBI-12070086">
        <id>Q5J8X5</id>
    </interactant>
    <interactant intactId="EBI-18271435">
        <id>Q0VAB0</id>
        <label>TBXA2R</label>
    </interactant>
    <organismsDiffer>false</organismsDiffer>
    <experiments>3</experiments>
</comment>
<comment type="interaction">
    <interactant intactId="EBI-12070086">
        <id>Q5J8X5</id>
    </interactant>
    <interactant intactId="EBI-12947623">
        <id>Q96MV1</id>
        <label>TLCD4</label>
    </interactant>
    <organismsDiffer>false</organismsDiffer>
    <experiments>3</experiments>
</comment>
<comment type="interaction">
    <interactant intactId="EBI-12070086">
        <id>Q5J8X5</id>
    </interactant>
    <interactant intactId="EBI-13351685">
        <id>Q96CE8</id>
        <label>TM4SF18</label>
    </interactant>
    <organismsDiffer>false</organismsDiffer>
    <experiments>3</experiments>
</comment>
<comment type="interaction">
    <interactant intactId="EBI-12070086">
        <id>Q5J8X5</id>
    </interactant>
    <interactant intactId="EBI-23725088">
        <id>Q7Z404-3</id>
        <label>TMC4</label>
    </interactant>
    <organismsDiffer>false</organismsDiffer>
    <experiments>3</experiments>
</comment>
<comment type="interaction">
    <interactant intactId="EBI-12070086">
        <id>Q5J8X5</id>
    </interactant>
    <interactant intactId="EBI-8638294">
        <id>Q9NUH8</id>
        <label>TMEM14B</label>
    </interactant>
    <organismsDiffer>false</organismsDiffer>
    <experiments>3</experiments>
</comment>
<comment type="interaction">
    <interactant intactId="EBI-12070086">
        <id>Q5J8X5</id>
    </interactant>
    <interactant intactId="EBI-10982110">
        <id>Q96Q45-2</id>
        <label>TMEM237</label>
    </interactant>
    <organismsDiffer>false</organismsDiffer>
    <experiments>3</experiments>
</comment>
<comment type="interaction">
    <interactant intactId="EBI-12070086">
        <id>Q5J8X5</id>
    </interactant>
    <interactant intactId="EBI-18178701">
        <id>Q4KMG9</id>
        <label>TMEM52B</label>
    </interactant>
    <organismsDiffer>false</organismsDiffer>
    <experiments>3</experiments>
</comment>
<comment type="interaction">
    <interactant intactId="EBI-12070086">
        <id>Q5J8X5</id>
    </interactant>
    <interactant intactId="EBI-10292091">
        <id>Q96NL1</id>
        <label>TMEM74</label>
    </interactant>
    <organismsDiffer>false</organismsDiffer>
    <experiments>3</experiments>
</comment>
<comment type="interaction">
    <interactant intactId="EBI-12070086">
        <id>Q5J8X5</id>
    </interactant>
    <interactant intactId="EBI-744988">
        <id>Q9H7M9</id>
        <label>VSIR</label>
    </interactant>
    <organismsDiffer>false</organismsDiffer>
    <experiments>3</experiments>
</comment>
<comment type="subcellular location">
    <subcellularLocation>
        <location evidence="5">Membrane</location>
        <topology evidence="5">Multi-pass membrane protein</topology>
    </subcellularLocation>
</comment>
<comment type="alternative products">
    <event type="alternative splicing"/>
    <isoform>
        <id>Q5J8X5-1</id>
        <name>1</name>
        <sequence type="displayed"/>
    </isoform>
    <isoform>
        <id>Q5J8X5-2</id>
        <name>2</name>
        <sequence type="described" ref="VSP_030476"/>
    </isoform>
    <isoform>
        <id>Q5J8X5-3</id>
        <name>3</name>
        <sequence type="described" ref="VSP_030477"/>
    </isoform>
</comment>
<comment type="similarity">
    <text evidence="5">Belongs to the MS4A family.</text>
</comment>
<reference key="1">
    <citation type="submission" date="2003-06" db="EMBL/GenBank/DDBJ databases">
        <title>Isolation and characterization of a novel human four-transmembrane gene of the MS4A family expressed in the testis.</title>
        <authorList>
            <person name="Hulett M.D."/>
            <person name="Hornby J.R."/>
            <person name="Halliday D.C.T."/>
        </authorList>
    </citation>
    <scope>NUCLEOTIDE SEQUENCE [MRNA] (ISOFORMS 1; 2 AND 3)</scope>
</reference>
<reference key="2">
    <citation type="journal article" date="2006" name="Nature">
        <title>Human chromosome 11 DNA sequence and analysis including novel gene identification.</title>
        <authorList>
            <person name="Taylor T.D."/>
            <person name="Noguchi H."/>
            <person name="Totoki Y."/>
            <person name="Toyoda A."/>
            <person name="Kuroki Y."/>
            <person name="Dewar K."/>
            <person name="Lloyd C."/>
            <person name="Itoh T."/>
            <person name="Takeda T."/>
            <person name="Kim D.-W."/>
            <person name="She X."/>
            <person name="Barlow K.F."/>
            <person name="Bloom T."/>
            <person name="Bruford E."/>
            <person name="Chang J.L."/>
            <person name="Cuomo C.A."/>
            <person name="Eichler E."/>
            <person name="FitzGerald M.G."/>
            <person name="Jaffe D.B."/>
            <person name="LaButti K."/>
            <person name="Nicol R."/>
            <person name="Park H.-S."/>
            <person name="Seaman C."/>
            <person name="Sougnez C."/>
            <person name="Yang X."/>
            <person name="Zimmer A.R."/>
            <person name="Zody M.C."/>
            <person name="Birren B.W."/>
            <person name="Nusbaum C."/>
            <person name="Fujiyama A."/>
            <person name="Hattori M."/>
            <person name="Rogers J."/>
            <person name="Lander E.S."/>
            <person name="Sakaki Y."/>
        </authorList>
    </citation>
    <scope>NUCLEOTIDE SEQUENCE [LARGE SCALE GENOMIC DNA]</scope>
</reference>
<reference key="3">
    <citation type="journal article" date="2004" name="Genome Res.">
        <title>The status, quality, and expansion of the NIH full-length cDNA project: the Mammalian Gene Collection (MGC).</title>
        <authorList>
            <consortium name="The MGC Project Team"/>
        </authorList>
    </citation>
    <scope>NUCLEOTIDE SEQUENCE [LARGE SCALE MRNA] (ISOFORM 1)</scope>
    <scope>VARIANT VAL-7</scope>
</reference>
<sequence>MIGIFHIFMWYFLLVLYMGQIKGAFGTYEPVTYKTGCTLWGIFFIIAGVFLIRVTKYPTRSGIISTLIINIICIITTITAVTLTIIELSHFNSVSYRNYGQAKLGREVSRILLFFYGLEFSIALTHSIYSCSNLFRRQNDLTSVTEEAESTP</sequence>
<proteinExistence type="evidence at protein level"/>
<name>M4A13_HUMAN</name>
<accession>Q5J8X5</accession>
<accession>B2RTS9</accession>
<accession>Q5J8X3</accession>
<accession>Q5J8X4</accession>
<feature type="chain" id="PRO_0000315055" description="Membrane-spanning 4-domains subfamily A member 13">
    <location>
        <begin position="1"/>
        <end position="152"/>
    </location>
</feature>
<feature type="transmembrane region" description="Helical" evidence="2">
    <location>
        <begin position="1"/>
        <end position="21"/>
    </location>
</feature>
<feature type="transmembrane region" description="Helical" evidence="2">
    <location>
        <begin position="32"/>
        <end position="52"/>
    </location>
</feature>
<feature type="transmembrane region" description="Helical" evidence="2">
    <location>
        <begin position="66"/>
        <end position="86"/>
    </location>
</feature>
<feature type="transmembrane region" description="Helical" evidence="2">
    <location>
        <begin position="111"/>
        <end position="131"/>
    </location>
</feature>
<feature type="splice variant" id="VSP_030477" description="In isoform 3." evidence="4">
    <location>
        <begin position="44"/>
        <end position="102"/>
    </location>
</feature>
<feature type="splice variant" id="VSP_030476" description="In isoform 2." evidence="4">
    <location>
        <begin position="63"/>
        <end position="102"/>
    </location>
</feature>
<feature type="sequence variant" id="VAR_062124" description="In dbSNP:rs55756397.">
    <original>G</original>
    <variation>D</variation>
    <location>
        <position position="3"/>
    </location>
</feature>
<feature type="sequence variant" id="VAR_062125" description="In dbSNP:rs10736706." evidence="3">
    <original>I</original>
    <variation>V</variation>
    <location>
        <position position="7"/>
    </location>
</feature>
<feature type="sequence variant" id="VAR_057654" description="In dbSNP:rs6591595.">
    <original>P</original>
    <variation>L</variation>
    <location>
        <position position="58"/>
    </location>
</feature>
<feature type="sequence conflict" description="In Ref. 1; AAQ94112." evidence="5" ref="1">
    <original>A</original>
    <variation>V</variation>
    <location>
        <position position="102"/>
    </location>
</feature>
<protein>
    <recommendedName>
        <fullName>Membrane-spanning 4-domains subfamily A member 13</fullName>
    </recommendedName>
    <alternativeName>
        <fullName>Testis-expressed transmembrane protein 4</fullName>
    </alternativeName>
</protein>